<gene>
    <name evidence="1" type="primary">efp</name>
    <name type="ordered locus">DvMF_0372</name>
</gene>
<keyword id="KW-0963">Cytoplasm</keyword>
<keyword id="KW-0251">Elongation factor</keyword>
<keyword id="KW-0648">Protein biosynthesis</keyword>
<proteinExistence type="inferred from homology"/>
<comment type="function">
    <text evidence="1">Involved in peptide bond synthesis. Stimulates efficient translation and peptide-bond synthesis on native or reconstituted 70S ribosomes in vitro. Probably functions indirectly by altering the affinity of the ribosome for aminoacyl-tRNA, thus increasing their reactivity as acceptors for peptidyl transferase.</text>
</comment>
<comment type="pathway">
    <text evidence="1">Protein biosynthesis; polypeptide chain elongation.</text>
</comment>
<comment type="subcellular location">
    <subcellularLocation>
        <location evidence="1">Cytoplasm</location>
    </subcellularLocation>
</comment>
<comment type="similarity">
    <text evidence="1">Belongs to the elongation factor P family.</text>
</comment>
<accession>B8DJK7</accession>
<evidence type="ECO:0000255" key="1">
    <source>
        <dbReference type="HAMAP-Rule" id="MF_00141"/>
    </source>
</evidence>
<organism>
    <name type="scientific">Nitratidesulfovibrio vulgaris (strain DSM 19637 / Miyazaki F)</name>
    <name type="common">Desulfovibrio vulgaris</name>
    <dbReference type="NCBI Taxonomy" id="883"/>
    <lineage>
        <taxon>Bacteria</taxon>
        <taxon>Pseudomonadati</taxon>
        <taxon>Thermodesulfobacteriota</taxon>
        <taxon>Desulfovibrionia</taxon>
        <taxon>Desulfovibrionales</taxon>
        <taxon>Desulfovibrionaceae</taxon>
        <taxon>Nitratidesulfovibrio</taxon>
    </lineage>
</organism>
<sequence>MYSTTDFRKGLKIEIDGTPFEIVEFQHFKPGKGGAMVRTKLRNLLNDRMVDNTFRSGEKVGRPDMETREMQYLYREGDDLVFMDLTTYEQLHIAEDTTDGKAGFLKEAQQVRVLLYNGKPLDIDLPVSLVLEVTDTEPGAKGDTVSNVTKPATLETGIVIGVPIFVNIGDRVKVDTRTRDYLGRE</sequence>
<feature type="chain" id="PRO_1000117893" description="Elongation factor P">
    <location>
        <begin position="1"/>
        <end position="185"/>
    </location>
</feature>
<reference key="1">
    <citation type="submission" date="2008-10" db="EMBL/GenBank/DDBJ databases">
        <title>Complete sequence of Desulfovibrio vulgaris str. 'Miyazaki F'.</title>
        <authorList>
            <person name="Lucas S."/>
            <person name="Copeland A."/>
            <person name="Lapidus A."/>
            <person name="Glavina del Rio T."/>
            <person name="Dalin E."/>
            <person name="Tice H."/>
            <person name="Bruce D."/>
            <person name="Goodwin L."/>
            <person name="Pitluck S."/>
            <person name="Sims D."/>
            <person name="Brettin T."/>
            <person name="Detter J.C."/>
            <person name="Han C."/>
            <person name="Larimer F."/>
            <person name="Land M."/>
            <person name="Hauser L."/>
            <person name="Kyrpides N."/>
            <person name="Mikhailova N."/>
            <person name="Hazen T.C."/>
            <person name="Richardson P."/>
        </authorList>
    </citation>
    <scope>NUCLEOTIDE SEQUENCE [LARGE SCALE GENOMIC DNA]</scope>
    <source>
        <strain>DSM 19637 / Miyazaki F</strain>
    </source>
</reference>
<protein>
    <recommendedName>
        <fullName evidence="1">Elongation factor P</fullName>
        <shortName evidence="1">EF-P</shortName>
    </recommendedName>
</protein>
<name>EFP_NITV9</name>
<dbReference type="EMBL" id="CP001197">
    <property type="protein sequence ID" value="ACL07329.1"/>
    <property type="molecule type" value="Genomic_DNA"/>
</dbReference>
<dbReference type="SMR" id="B8DJK7"/>
<dbReference type="STRING" id="883.DvMF_0372"/>
<dbReference type="KEGG" id="dvm:DvMF_0372"/>
<dbReference type="eggNOG" id="COG0231">
    <property type="taxonomic scope" value="Bacteria"/>
</dbReference>
<dbReference type="HOGENOM" id="CLU_074944_0_1_7"/>
<dbReference type="OrthoDB" id="9801844at2"/>
<dbReference type="UniPathway" id="UPA00345"/>
<dbReference type="GO" id="GO:0005737">
    <property type="term" value="C:cytoplasm"/>
    <property type="evidence" value="ECO:0007669"/>
    <property type="project" value="UniProtKB-SubCell"/>
</dbReference>
<dbReference type="GO" id="GO:0003746">
    <property type="term" value="F:translation elongation factor activity"/>
    <property type="evidence" value="ECO:0007669"/>
    <property type="project" value="UniProtKB-UniRule"/>
</dbReference>
<dbReference type="GO" id="GO:0043043">
    <property type="term" value="P:peptide biosynthetic process"/>
    <property type="evidence" value="ECO:0007669"/>
    <property type="project" value="InterPro"/>
</dbReference>
<dbReference type="CDD" id="cd04470">
    <property type="entry name" value="S1_EF-P_repeat_1"/>
    <property type="match status" value="1"/>
</dbReference>
<dbReference type="CDD" id="cd05794">
    <property type="entry name" value="S1_EF-P_repeat_2"/>
    <property type="match status" value="1"/>
</dbReference>
<dbReference type="FunFam" id="2.30.30.30:FF:000003">
    <property type="entry name" value="Elongation factor P"/>
    <property type="match status" value="1"/>
</dbReference>
<dbReference type="FunFam" id="2.40.50.140:FF:000004">
    <property type="entry name" value="Elongation factor P"/>
    <property type="match status" value="1"/>
</dbReference>
<dbReference type="FunFam" id="2.40.50.140:FF:000009">
    <property type="entry name" value="Elongation factor P"/>
    <property type="match status" value="1"/>
</dbReference>
<dbReference type="Gene3D" id="2.30.30.30">
    <property type="match status" value="1"/>
</dbReference>
<dbReference type="Gene3D" id="2.40.50.140">
    <property type="entry name" value="Nucleic acid-binding proteins"/>
    <property type="match status" value="2"/>
</dbReference>
<dbReference type="HAMAP" id="MF_00141">
    <property type="entry name" value="EF_P"/>
    <property type="match status" value="1"/>
</dbReference>
<dbReference type="InterPro" id="IPR015365">
    <property type="entry name" value="Elong-fact-P_C"/>
</dbReference>
<dbReference type="InterPro" id="IPR012340">
    <property type="entry name" value="NA-bd_OB-fold"/>
</dbReference>
<dbReference type="InterPro" id="IPR014722">
    <property type="entry name" value="Rib_uL2_dom2"/>
</dbReference>
<dbReference type="InterPro" id="IPR020599">
    <property type="entry name" value="Transl_elong_fac_P/YeiP"/>
</dbReference>
<dbReference type="InterPro" id="IPR013185">
    <property type="entry name" value="Transl_elong_KOW-like"/>
</dbReference>
<dbReference type="InterPro" id="IPR001059">
    <property type="entry name" value="Transl_elong_P/YeiP_cen"/>
</dbReference>
<dbReference type="InterPro" id="IPR013852">
    <property type="entry name" value="Transl_elong_P/YeiP_CS"/>
</dbReference>
<dbReference type="InterPro" id="IPR011768">
    <property type="entry name" value="Transl_elongation_fac_P"/>
</dbReference>
<dbReference type="InterPro" id="IPR008991">
    <property type="entry name" value="Translation_prot_SH3-like_sf"/>
</dbReference>
<dbReference type="NCBIfam" id="TIGR00038">
    <property type="entry name" value="efp"/>
    <property type="match status" value="1"/>
</dbReference>
<dbReference type="NCBIfam" id="NF001810">
    <property type="entry name" value="PRK00529.1"/>
    <property type="match status" value="1"/>
</dbReference>
<dbReference type="PANTHER" id="PTHR30053">
    <property type="entry name" value="ELONGATION FACTOR P"/>
    <property type="match status" value="1"/>
</dbReference>
<dbReference type="PANTHER" id="PTHR30053:SF12">
    <property type="entry name" value="ELONGATION FACTOR P (EF-P) FAMILY PROTEIN"/>
    <property type="match status" value="1"/>
</dbReference>
<dbReference type="Pfam" id="PF01132">
    <property type="entry name" value="EFP"/>
    <property type="match status" value="1"/>
</dbReference>
<dbReference type="Pfam" id="PF08207">
    <property type="entry name" value="EFP_N"/>
    <property type="match status" value="1"/>
</dbReference>
<dbReference type="Pfam" id="PF09285">
    <property type="entry name" value="Elong-fact-P_C"/>
    <property type="match status" value="1"/>
</dbReference>
<dbReference type="PIRSF" id="PIRSF005901">
    <property type="entry name" value="EF-P"/>
    <property type="match status" value="1"/>
</dbReference>
<dbReference type="SMART" id="SM01185">
    <property type="entry name" value="EFP"/>
    <property type="match status" value="1"/>
</dbReference>
<dbReference type="SMART" id="SM00841">
    <property type="entry name" value="Elong-fact-P_C"/>
    <property type="match status" value="1"/>
</dbReference>
<dbReference type="SUPFAM" id="SSF50249">
    <property type="entry name" value="Nucleic acid-binding proteins"/>
    <property type="match status" value="2"/>
</dbReference>
<dbReference type="SUPFAM" id="SSF50104">
    <property type="entry name" value="Translation proteins SH3-like domain"/>
    <property type="match status" value="1"/>
</dbReference>
<dbReference type="PROSITE" id="PS01275">
    <property type="entry name" value="EFP"/>
    <property type="match status" value="1"/>
</dbReference>